<gene>
    <name type="primary">menB</name>
</gene>
<geneLocation type="chloroplast"/>
<protein>
    <recommendedName>
        <fullName>1,4-dihydroxy-2-naphthoyl-CoA synthase</fullName>
        <shortName>DHNA-CoA synthase</shortName>
        <ecNumber>4.1.3.36</ecNumber>
    </recommendedName>
</protein>
<comment type="function">
    <text>Converts o-succinylbenzoyl-CoA (OSB-CoA) to 1,4-dihydroxy-2-naphthoyl-CoA (DHNA-CoA).</text>
</comment>
<comment type="catalytic activity">
    <reaction>
        <text>2-succinylbenzoyl-CoA + H(+) = 1,4-dihydroxy-2-naphthoyl-CoA + H2O</text>
        <dbReference type="Rhea" id="RHEA:26562"/>
        <dbReference type="ChEBI" id="CHEBI:15377"/>
        <dbReference type="ChEBI" id="CHEBI:15378"/>
        <dbReference type="ChEBI" id="CHEBI:57364"/>
        <dbReference type="ChEBI" id="CHEBI:58897"/>
        <dbReference type="EC" id="4.1.3.36"/>
    </reaction>
</comment>
<comment type="cofactor">
    <cofactor evidence="1">
        <name>hydrogencarbonate</name>
        <dbReference type="ChEBI" id="CHEBI:17544"/>
    </cofactor>
    <text evidence="1">The hydrogencarbonate anion plays the same catalytic role (proton acceptor) as the side-chain carboxylate group of the essential 'Asp-185' found in actinobacteria, archaea, bacteroidetes, and deltaproteobacteria.</text>
</comment>
<comment type="pathway">
    <text>Quinol/quinone metabolism; 1,4-dihydroxy-2-naphthoate biosynthesis; 1,4-dihydroxy-2-naphthoate from chorismate: step 6/7.</text>
</comment>
<comment type="pathway">
    <text>Quinol/quinone metabolism; menaquinone biosynthesis.</text>
</comment>
<comment type="subcellular location">
    <subcellularLocation>
        <location>Plastid</location>
        <location>Chloroplast</location>
    </subcellularLocation>
</comment>
<comment type="similarity">
    <text evidence="3">Belongs to the enoyl-CoA hydratase/isomerase family. MenB subfamily.</text>
</comment>
<proteinExistence type="inferred from homology"/>
<reference key="1">
    <citation type="journal article" date="2000" name="J. Mol. Evol.">
        <title>The structure and gene repertoire of an ancient red algal plastid genome.</title>
        <authorList>
            <person name="Gloeckner G."/>
            <person name="Rosenthal A."/>
            <person name="Valentin K.-U."/>
        </authorList>
    </citation>
    <scope>NUCLEOTIDE SEQUENCE [LARGE SCALE GENOMIC DNA]</scope>
    <source>
        <strain>RK-1</strain>
    </source>
</reference>
<accession>Q9TM10</accession>
<evidence type="ECO:0000250" key="1"/>
<evidence type="ECO:0000255" key="2"/>
<evidence type="ECO:0000305" key="3"/>
<feature type="chain" id="PRO_0000109329" description="1,4-dihydroxy-2-naphthoyl-CoA synthase">
    <location>
        <begin position="1"/>
        <end position="268"/>
    </location>
</feature>
<feature type="binding site" evidence="1">
    <location>
        <begin position="30"/>
        <end position="31"/>
    </location>
    <ligand>
        <name>substrate</name>
    </ligand>
</feature>
<feature type="binding site" evidence="1">
    <location>
        <begin position="70"/>
        <end position="74"/>
    </location>
    <ligand>
        <name>substrate</name>
    </ligand>
</feature>
<feature type="binding site" evidence="1">
    <location>
        <begin position="114"/>
        <end position="118"/>
    </location>
    <ligand>
        <name>substrate</name>
    </ligand>
</feature>
<feature type="binding site" evidence="1">
    <location>
        <begin position="139"/>
        <end position="141"/>
    </location>
    <ligand>
        <name>hydrogencarbonate</name>
        <dbReference type="ChEBI" id="CHEBI:17544"/>
    </ligand>
</feature>
<feature type="binding site" evidence="1">
    <location>
        <position position="140"/>
    </location>
    <ligand>
        <name>substrate</name>
    </ligand>
</feature>
<feature type="binding site" evidence="1">
    <location>
        <position position="146"/>
    </location>
    <ligand>
        <name>substrate</name>
    </ligand>
</feature>
<feature type="site" description="Important for catalysis" evidence="2">
    <location>
        <position position="148"/>
    </location>
</feature>
<feature type="site" description="Important for catalysis" evidence="2">
    <location>
        <position position="243"/>
    </location>
</feature>
<organism>
    <name type="scientific">Cyanidium caldarium</name>
    <name type="common">Red alga</name>
    <dbReference type="NCBI Taxonomy" id="2771"/>
    <lineage>
        <taxon>Eukaryota</taxon>
        <taxon>Rhodophyta</taxon>
        <taxon>Bangiophyceae</taxon>
        <taxon>Cyanidiales</taxon>
        <taxon>Cyanidiaceae</taxon>
        <taxon>Cyanidium</taxon>
    </lineage>
</organism>
<keyword id="KW-0150">Chloroplast</keyword>
<keyword id="KW-0456">Lyase</keyword>
<keyword id="KW-0474">Menaquinone biosynthesis</keyword>
<keyword id="KW-0934">Plastid</keyword>
<sequence length="268" mass="29750">MQTIAIKDFIDIKYIKQDQISEIIISRPQVLNAFRPRTINEIIAAFYDSREDSSIGVVILSGHGSRAFCVGGDQKIRSKTGYIDEKGRSSLNVLELQRIIRTFPKPVIAKVSGYAVGGGQILNMMCDLTIASENAVLGQSGPKVGSFDAGYGSAYMARIIGQKKARELWFTCYQYDAFEAYKMGLVNWVVKIEDLDSYAIKLATDILNKSPLAIRFLKSSLNADCDGQSGLQELAGYSTMLFYMSAEGQEGHRAFLENREPDFSKFNS</sequence>
<name>MENB_CYACA</name>
<dbReference type="EC" id="4.1.3.36"/>
<dbReference type="EMBL" id="AF022186">
    <property type="protein sequence ID" value="AAF12988.1"/>
    <property type="molecule type" value="Genomic_DNA"/>
</dbReference>
<dbReference type="RefSeq" id="NP_045107.1">
    <property type="nucleotide sequence ID" value="NC_001840.1"/>
</dbReference>
<dbReference type="SMR" id="Q9TM10"/>
<dbReference type="GeneID" id="800186"/>
<dbReference type="UniPathway" id="UPA00079"/>
<dbReference type="UniPathway" id="UPA01057">
    <property type="reaction ID" value="UER00167"/>
</dbReference>
<dbReference type="GO" id="GO:0009507">
    <property type="term" value="C:chloroplast"/>
    <property type="evidence" value="ECO:0007669"/>
    <property type="project" value="UniProtKB-SubCell"/>
</dbReference>
<dbReference type="GO" id="GO:0005829">
    <property type="term" value="C:cytosol"/>
    <property type="evidence" value="ECO:0007669"/>
    <property type="project" value="TreeGrafter"/>
</dbReference>
<dbReference type="GO" id="GO:0008935">
    <property type="term" value="F:1,4-dihydroxy-2-naphthoyl-CoA synthase activity"/>
    <property type="evidence" value="ECO:0007669"/>
    <property type="project" value="UniProtKB-EC"/>
</dbReference>
<dbReference type="GO" id="GO:0009234">
    <property type="term" value="P:menaquinone biosynthetic process"/>
    <property type="evidence" value="ECO:0007669"/>
    <property type="project" value="UniProtKB-UniPathway"/>
</dbReference>
<dbReference type="CDD" id="cd06558">
    <property type="entry name" value="crotonase-like"/>
    <property type="match status" value="1"/>
</dbReference>
<dbReference type="Gene3D" id="3.90.226.10">
    <property type="entry name" value="2-enoyl-CoA Hydratase, Chain A, domain 1"/>
    <property type="match status" value="1"/>
</dbReference>
<dbReference type="Gene3D" id="1.10.12.10">
    <property type="entry name" value="Lyase 2-enoyl-coa Hydratase, Chain A, domain 2"/>
    <property type="match status" value="1"/>
</dbReference>
<dbReference type="HAMAP" id="MF_01934">
    <property type="entry name" value="MenB"/>
    <property type="match status" value="1"/>
</dbReference>
<dbReference type="InterPro" id="IPR029045">
    <property type="entry name" value="ClpP/crotonase-like_dom_sf"/>
</dbReference>
<dbReference type="InterPro" id="IPR010198">
    <property type="entry name" value="DHNA-CoA_synthase_MenB"/>
</dbReference>
<dbReference type="InterPro" id="IPR018376">
    <property type="entry name" value="Enoyl-CoA_hyd/isom_CS"/>
</dbReference>
<dbReference type="InterPro" id="IPR001753">
    <property type="entry name" value="Enoyl-CoA_hydra/iso"/>
</dbReference>
<dbReference type="InterPro" id="IPR014748">
    <property type="entry name" value="Enoyl-CoA_hydra_C"/>
</dbReference>
<dbReference type="NCBIfam" id="TIGR01929">
    <property type="entry name" value="menB"/>
    <property type="match status" value="1"/>
</dbReference>
<dbReference type="NCBIfam" id="NF005637">
    <property type="entry name" value="PRK07396.1"/>
    <property type="match status" value="1"/>
</dbReference>
<dbReference type="PANTHER" id="PTHR43113:SF1">
    <property type="entry name" value="1,4-DIHYDROXY-2-NAPHTHOYL-COA SYNTHASE, PEROXISOMAL"/>
    <property type="match status" value="1"/>
</dbReference>
<dbReference type="PANTHER" id="PTHR43113">
    <property type="entry name" value="NUCLEOSIDE-DIPHOSPHATE-SUGAR EPIMERASE"/>
    <property type="match status" value="1"/>
</dbReference>
<dbReference type="Pfam" id="PF00378">
    <property type="entry name" value="ECH_1"/>
    <property type="match status" value="1"/>
</dbReference>
<dbReference type="SUPFAM" id="SSF52096">
    <property type="entry name" value="ClpP/crotonase"/>
    <property type="match status" value="1"/>
</dbReference>
<dbReference type="PROSITE" id="PS00166">
    <property type="entry name" value="ENOYL_COA_HYDRATASE"/>
    <property type="match status" value="1"/>
</dbReference>